<keyword id="KW-0687">Ribonucleoprotein</keyword>
<keyword id="KW-0689">Ribosomal protein</keyword>
<gene>
    <name evidence="1" type="primary">rpmH</name>
    <name type="ordered locus">Shewmr7_4035</name>
</gene>
<reference key="1">
    <citation type="submission" date="2006-08" db="EMBL/GenBank/DDBJ databases">
        <title>Complete sequence of chromosome 1 of Shewanella sp. MR-7.</title>
        <authorList>
            <person name="Copeland A."/>
            <person name="Lucas S."/>
            <person name="Lapidus A."/>
            <person name="Barry K."/>
            <person name="Detter J.C."/>
            <person name="Glavina del Rio T."/>
            <person name="Hammon N."/>
            <person name="Israni S."/>
            <person name="Dalin E."/>
            <person name="Tice H."/>
            <person name="Pitluck S."/>
            <person name="Kiss H."/>
            <person name="Brettin T."/>
            <person name="Bruce D."/>
            <person name="Han C."/>
            <person name="Tapia R."/>
            <person name="Gilna P."/>
            <person name="Schmutz J."/>
            <person name="Larimer F."/>
            <person name="Land M."/>
            <person name="Hauser L."/>
            <person name="Kyrpides N."/>
            <person name="Mikhailova N."/>
            <person name="Nealson K."/>
            <person name="Konstantinidis K."/>
            <person name="Klappenbach J."/>
            <person name="Tiedje J."/>
            <person name="Richardson P."/>
        </authorList>
    </citation>
    <scope>NUCLEOTIDE SEQUENCE [LARGE SCALE GENOMIC DNA]</scope>
    <source>
        <strain>MR-7</strain>
    </source>
</reference>
<name>RL34_SHESR</name>
<accession>Q0HPE3</accession>
<organism>
    <name type="scientific">Shewanella sp. (strain MR-7)</name>
    <dbReference type="NCBI Taxonomy" id="60481"/>
    <lineage>
        <taxon>Bacteria</taxon>
        <taxon>Pseudomonadati</taxon>
        <taxon>Pseudomonadota</taxon>
        <taxon>Gammaproteobacteria</taxon>
        <taxon>Alteromonadales</taxon>
        <taxon>Shewanellaceae</taxon>
        <taxon>Shewanella</taxon>
    </lineage>
</organism>
<proteinExistence type="inferred from homology"/>
<evidence type="ECO:0000255" key="1">
    <source>
        <dbReference type="HAMAP-Rule" id="MF_00391"/>
    </source>
</evidence>
<evidence type="ECO:0000256" key="2">
    <source>
        <dbReference type="SAM" id="MobiDB-lite"/>
    </source>
</evidence>
<evidence type="ECO:0000305" key="3"/>
<feature type="chain" id="PRO_1000013445" description="Large ribosomal subunit protein bL34">
    <location>
        <begin position="1"/>
        <end position="45"/>
    </location>
</feature>
<feature type="region of interest" description="Disordered" evidence="2">
    <location>
        <begin position="1"/>
        <end position="21"/>
    </location>
</feature>
<feature type="compositionally biased region" description="Polar residues" evidence="2">
    <location>
        <begin position="1"/>
        <end position="10"/>
    </location>
</feature>
<feature type="compositionally biased region" description="Basic residues" evidence="2">
    <location>
        <begin position="11"/>
        <end position="20"/>
    </location>
</feature>
<protein>
    <recommendedName>
        <fullName evidence="1">Large ribosomal subunit protein bL34</fullName>
    </recommendedName>
    <alternativeName>
        <fullName evidence="3">50S ribosomal protein L34</fullName>
    </alternativeName>
</protein>
<sequence length="45" mass="5153">MSKRTFQPSNLKRKRSHGFRARMATVGGRKVLARRRAKGRARLSA</sequence>
<comment type="similarity">
    <text evidence="1">Belongs to the bacterial ribosomal protein bL34 family.</text>
</comment>
<dbReference type="EMBL" id="CP000444">
    <property type="protein sequence ID" value="ABI45012.1"/>
    <property type="molecule type" value="Genomic_DNA"/>
</dbReference>
<dbReference type="SMR" id="Q0HPE3"/>
<dbReference type="KEGG" id="shm:Shewmr7_4035"/>
<dbReference type="HOGENOM" id="CLU_129938_2_0_6"/>
<dbReference type="GO" id="GO:1990904">
    <property type="term" value="C:ribonucleoprotein complex"/>
    <property type="evidence" value="ECO:0007669"/>
    <property type="project" value="UniProtKB-KW"/>
</dbReference>
<dbReference type="GO" id="GO:0005840">
    <property type="term" value="C:ribosome"/>
    <property type="evidence" value="ECO:0007669"/>
    <property type="project" value="UniProtKB-KW"/>
</dbReference>
<dbReference type="GO" id="GO:0003735">
    <property type="term" value="F:structural constituent of ribosome"/>
    <property type="evidence" value="ECO:0007669"/>
    <property type="project" value="InterPro"/>
</dbReference>
<dbReference type="GO" id="GO:0006412">
    <property type="term" value="P:translation"/>
    <property type="evidence" value="ECO:0007669"/>
    <property type="project" value="UniProtKB-UniRule"/>
</dbReference>
<dbReference type="FunFam" id="1.10.287.3980:FF:000001">
    <property type="entry name" value="Mitochondrial ribosomal protein L34"/>
    <property type="match status" value="1"/>
</dbReference>
<dbReference type="Gene3D" id="1.10.287.3980">
    <property type="match status" value="1"/>
</dbReference>
<dbReference type="HAMAP" id="MF_00391">
    <property type="entry name" value="Ribosomal_bL34"/>
    <property type="match status" value="1"/>
</dbReference>
<dbReference type="InterPro" id="IPR000271">
    <property type="entry name" value="Ribosomal_bL34"/>
</dbReference>
<dbReference type="InterPro" id="IPR020939">
    <property type="entry name" value="Ribosomal_bL34_CS"/>
</dbReference>
<dbReference type="NCBIfam" id="TIGR01030">
    <property type="entry name" value="rpmH_bact"/>
    <property type="match status" value="1"/>
</dbReference>
<dbReference type="PANTHER" id="PTHR14503:SF4">
    <property type="entry name" value="LARGE RIBOSOMAL SUBUNIT PROTEIN BL34M"/>
    <property type="match status" value="1"/>
</dbReference>
<dbReference type="PANTHER" id="PTHR14503">
    <property type="entry name" value="MITOCHONDRIAL RIBOSOMAL PROTEIN 34 FAMILY MEMBER"/>
    <property type="match status" value="1"/>
</dbReference>
<dbReference type="Pfam" id="PF00468">
    <property type="entry name" value="Ribosomal_L34"/>
    <property type="match status" value="1"/>
</dbReference>
<dbReference type="PROSITE" id="PS00784">
    <property type="entry name" value="RIBOSOMAL_L34"/>
    <property type="match status" value="1"/>
</dbReference>